<comment type="function">
    <text evidence="1">Involved in the regulation of the intracellular balance of NAD and NADP, and is a key enzyme in the biosynthesis of NADP. Catalyzes specifically the phosphorylation on 2'-hydroxyl of the adenosine moiety of NAD to yield NADP.</text>
</comment>
<comment type="catalytic activity">
    <reaction evidence="1">
        <text>NAD(+) + ATP = ADP + NADP(+) + H(+)</text>
        <dbReference type="Rhea" id="RHEA:18629"/>
        <dbReference type="ChEBI" id="CHEBI:15378"/>
        <dbReference type="ChEBI" id="CHEBI:30616"/>
        <dbReference type="ChEBI" id="CHEBI:57540"/>
        <dbReference type="ChEBI" id="CHEBI:58349"/>
        <dbReference type="ChEBI" id="CHEBI:456216"/>
        <dbReference type="EC" id="2.7.1.23"/>
    </reaction>
</comment>
<comment type="cofactor">
    <cofactor evidence="1">
        <name>a divalent metal cation</name>
        <dbReference type="ChEBI" id="CHEBI:60240"/>
    </cofactor>
</comment>
<comment type="subcellular location">
    <subcellularLocation>
        <location evidence="1">Cytoplasm</location>
    </subcellularLocation>
</comment>
<comment type="similarity">
    <text evidence="1">Belongs to the NAD kinase family.</text>
</comment>
<keyword id="KW-0067">ATP-binding</keyword>
<keyword id="KW-0963">Cytoplasm</keyword>
<keyword id="KW-0418">Kinase</keyword>
<keyword id="KW-0520">NAD</keyword>
<keyword id="KW-0521">NADP</keyword>
<keyword id="KW-0547">Nucleotide-binding</keyword>
<keyword id="KW-0808">Transferase</keyword>
<protein>
    <recommendedName>
        <fullName evidence="1">NAD kinase</fullName>
        <ecNumber evidence="1">2.7.1.23</ecNumber>
    </recommendedName>
    <alternativeName>
        <fullName evidence="1">ATP-dependent NAD kinase</fullName>
    </alternativeName>
</protein>
<feature type="chain" id="PRO_0000120684" description="NAD kinase">
    <location>
        <begin position="1"/>
        <end position="305"/>
    </location>
</feature>
<feature type="active site" description="Proton acceptor" evidence="1">
    <location>
        <position position="88"/>
    </location>
</feature>
<feature type="binding site" evidence="1">
    <location>
        <begin position="88"/>
        <end position="89"/>
    </location>
    <ligand>
        <name>NAD(+)</name>
        <dbReference type="ChEBI" id="CHEBI:57540"/>
    </ligand>
</feature>
<feature type="binding site" evidence="1">
    <location>
        <position position="93"/>
    </location>
    <ligand>
        <name>NAD(+)</name>
        <dbReference type="ChEBI" id="CHEBI:57540"/>
    </ligand>
</feature>
<feature type="binding site" evidence="1">
    <location>
        <begin position="162"/>
        <end position="163"/>
    </location>
    <ligand>
        <name>NAD(+)</name>
        <dbReference type="ChEBI" id="CHEBI:57540"/>
    </ligand>
</feature>
<feature type="binding site" evidence="1">
    <location>
        <position position="173"/>
    </location>
    <ligand>
        <name>NAD(+)</name>
        <dbReference type="ChEBI" id="CHEBI:57540"/>
    </ligand>
</feature>
<feature type="binding site" evidence="1">
    <location>
        <position position="192"/>
    </location>
    <ligand>
        <name>NAD(+)</name>
        <dbReference type="ChEBI" id="CHEBI:57540"/>
    </ligand>
</feature>
<feature type="binding site" evidence="1">
    <location>
        <begin position="203"/>
        <end position="208"/>
    </location>
    <ligand>
        <name>NAD(+)</name>
        <dbReference type="ChEBI" id="CHEBI:57540"/>
    </ligand>
</feature>
<feature type="binding site" evidence="1">
    <location>
        <position position="262"/>
    </location>
    <ligand>
        <name>NAD(+)</name>
        <dbReference type="ChEBI" id="CHEBI:57540"/>
    </ligand>
</feature>
<sequence length="305" mass="33273">MRVYIAHNGCLEAEPIYGTICELVAQRKMSVITDPHARNNESARNTDSGVVSLNQAGRNKYLDQETTSPATSRSINVPFCAGISIGGDGTFLRMARDLKNTGTPLFGVNMGRMGFLVDIEPEDIVNLVENIVKGEYTEEKRLPITASVQRGGKKIHDEWAVNEITIERKVEGKVVDIEVFVDGCRVMDISCNGIIIATATGSTAYSFSSGGPIVWPEMKVTLVVPVSPHELFAKPIVLPDNRSILLKVTSRDNKVVLCSDGQVRLCLQSGDEIACHVGKVPVVFGRVKKGCFAEHLVKKFNLQTA</sequence>
<gene>
    <name evidence="1" type="primary">nadK</name>
    <name type="ordered locus">TW112</name>
</gene>
<name>NADK_TROW8</name>
<dbReference type="EC" id="2.7.1.23" evidence="1"/>
<dbReference type="EMBL" id="BX251410">
    <property type="protein sequence ID" value="CAD66795.1"/>
    <property type="molecule type" value="Genomic_DNA"/>
</dbReference>
<dbReference type="RefSeq" id="WP_011096076.1">
    <property type="nucleotide sequence ID" value="NC_004551.1"/>
</dbReference>
<dbReference type="SMR" id="Q83IC3"/>
<dbReference type="GeneID" id="67387886"/>
<dbReference type="KEGG" id="tws:TW112"/>
<dbReference type="HOGENOM" id="CLU_008831_0_1_11"/>
<dbReference type="GO" id="GO:0005737">
    <property type="term" value="C:cytoplasm"/>
    <property type="evidence" value="ECO:0007669"/>
    <property type="project" value="UniProtKB-SubCell"/>
</dbReference>
<dbReference type="GO" id="GO:0005524">
    <property type="term" value="F:ATP binding"/>
    <property type="evidence" value="ECO:0007669"/>
    <property type="project" value="UniProtKB-KW"/>
</dbReference>
<dbReference type="GO" id="GO:0046872">
    <property type="term" value="F:metal ion binding"/>
    <property type="evidence" value="ECO:0007669"/>
    <property type="project" value="UniProtKB-UniRule"/>
</dbReference>
<dbReference type="GO" id="GO:0051287">
    <property type="term" value="F:NAD binding"/>
    <property type="evidence" value="ECO:0007669"/>
    <property type="project" value="UniProtKB-ARBA"/>
</dbReference>
<dbReference type="GO" id="GO:0003951">
    <property type="term" value="F:NAD+ kinase activity"/>
    <property type="evidence" value="ECO:0007669"/>
    <property type="project" value="UniProtKB-UniRule"/>
</dbReference>
<dbReference type="GO" id="GO:0019674">
    <property type="term" value="P:NAD metabolic process"/>
    <property type="evidence" value="ECO:0007669"/>
    <property type="project" value="InterPro"/>
</dbReference>
<dbReference type="GO" id="GO:0006741">
    <property type="term" value="P:NADP biosynthetic process"/>
    <property type="evidence" value="ECO:0007669"/>
    <property type="project" value="UniProtKB-UniRule"/>
</dbReference>
<dbReference type="Gene3D" id="3.40.50.10330">
    <property type="entry name" value="Probable inorganic polyphosphate/atp-NAD kinase, domain 1"/>
    <property type="match status" value="1"/>
</dbReference>
<dbReference type="Gene3D" id="2.60.200.30">
    <property type="entry name" value="Probable inorganic polyphosphate/atp-NAD kinase, domain 2"/>
    <property type="match status" value="1"/>
</dbReference>
<dbReference type="HAMAP" id="MF_00361">
    <property type="entry name" value="NAD_kinase"/>
    <property type="match status" value="1"/>
</dbReference>
<dbReference type="InterPro" id="IPR017438">
    <property type="entry name" value="ATP-NAD_kinase_N"/>
</dbReference>
<dbReference type="InterPro" id="IPR017437">
    <property type="entry name" value="ATP-NAD_kinase_PpnK-typ_C"/>
</dbReference>
<dbReference type="InterPro" id="IPR016064">
    <property type="entry name" value="NAD/diacylglycerol_kinase_sf"/>
</dbReference>
<dbReference type="InterPro" id="IPR002504">
    <property type="entry name" value="NADK"/>
</dbReference>
<dbReference type="PANTHER" id="PTHR20275">
    <property type="entry name" value="NAD KINASE"/>
    <property type="match status" value="1"/>
</dbReference>
<dbReference type="PANTHER" id="PTHR20275:SF0">
    <property type="entry name" value="NAD KINASE"/>
    <property type="match status" value="1"/>
</dbReference>
<dbReference type="Pfam" id="PF01513">
    <property type="entry name" value="NAD_kinase"/>
    <property type="match status" value="1"/>
</dbReference>
<dbReference type="Pfam" id="PF20143">
    <property type="entry name" value="NAD_kinase_C"/>
    <property type="match status" value="1"/>
</dbReference>
<dbReference type="SUPFAM" id="SSF111331">
    <property type="entry name" value="NAD kinase/diacylglycerol kinase-like"/>
    <property type="match status" value="1"/>
</dbReference>
<organism>
    <name type="scientific">Tropheryma whipplei (strain TW08/27)</name>
    <name type="common">Whipple's bacillus</name>
    <dbReference type="NCBI Taxonomy" id="218496"/>
    <lineage>
        <taxon>Bacteria</taxon>
        <taxon>Bacillati</taxon>
        <taxon>Actinomycetota</taxon>
        <taxon>Actinomycetes</taxon>
        <taxon>Micrococcales</taxon>
        <taxon>Tropherymataceae</taxon>
        <taxon>Tropheryma</taxon>
    </lineage>
</organism>
<reference key="1">
    <citation type="journal article" date="2003" name="Lancet">
        <title>Sequencing and analysis of the genome of the Whipple's disease bacterium Tropheryma whipplei.</title>
        <authorList>
            <person name="Bentley S.D."/>
            <person name="Maiwald M."/>
            <person name="Murphy L.D."/>
            <person name="Pallen M.J."/>
            <person name="Yeats C.A."/>
            <person name="Dover L.G."/>
            <person name="Norbertczak H.T."/>
            <person name="Besra G.S."/>
            <person name="Quail M.A."/>
            <person name="Harris D.E."/>
            <person name="von Herbay A."/>
            <person name="Goble A."/>
            <person name="Rutter S."/>
            <person name="Squares R."/>
            <person name="Squares S."/>
            <person name="Barrell B.G."/>
            <person name="Parkhill J."/>
            <person name="Relman D.A."/>
        </authorList>
    </citation>
    <scope>NUCLEOTIDE SEQUENCE [LARGE SCALE GENOMIC DNA]</scope>
    <source>
        <strain>TW08/27</strain>
    </source>
</reference>
<proteinExistence type="inferred from homology"/>
<evidence type="ECO:0000255" key="1">
    <source>
        <dbReference type="HAMAP-Rule" id="MF_00361"/>
    </source>
</evidence>
<accession>Q83IC3</accession>